<accession>Q93ZE9</accession>
<accession>Q9SIK5</accession>
<proteinExistence type="evidence at transcript level"/>
<feature type="chain" id="PRO_0000423463" description="Phosphatidylinositol/phosphatidylcholine transfer protein SFH3">
    <location>
        <begin position="1"/>
        <end position="548"/>
    </location>
</feature>
<feature type="domain" description="CRAL-TRIO" evidence="3">
    <location>
        <begin position="137"/>
        <end position="311"/>
    </location>
</feature>
<feature type="region of interest" description="Disordered" evidence="4">
    <location>
        <begin position="1"/>
        <end position="20"/>
    </location>
</feature>
<feature type="coiled-coil region" evidence="2">
    <location>
        <begin position="465"/>
        <end position="530"/>
    </location>
</feature>
<feature type="compositionally biased region" description="Basic and acidic residues" evidence="4">
    <location>
        <begin position="8"/>
        <end position="20"/>
    </location>
</feature>
<evidence type="ECO:0000250" key="1"/>
<evidence type="ECO:0000255" key="2"/>
<evidence type="ECO:0000255" key="3">
    <source>
        <dbReference type="PROSITE-ProRule" id="PRU00056"/>
    </source>
</evidence>
<evidence type="ECO:0000256" key="4">
    <source>
        <dbReference type="SAM" id="MobiDB-lite"/>
    </source>
</evidence>
<evidence type="ECO:0000269" key="5">
    <source>
    </source>
</evidence>
<evidence type="ECO:0000305" key="6"/>
<sequence>MTDTMSAHMDRHNKLDYDGSEDEKKTKLCSLKKKAINASNKFKHSFTKRTRRNSRVMSVSIVDDIDLEELQAVDAFRQALILDELLPSKHDDHHMMLRFLRARKFDLEKAKQMWTDMIHWRKEFGVDTIMEDFDFKEIDEVLKYYPQGYHGVDKDGRPVYIERLGQVDATKLMQVTTIDRYVKYHVREFEKTFNIKLPACSIAAKKHIDQSTTILDVQGVGLKSFSKAARDLLQRIQKIDSDNYPETLNRMFIINAGSGFRLLWSTVKSFLDPKTTAKIHVLGNKYQSKLLEIIDSNELPEFLGGNCTCADKGGCMRSDKGPWNDPDIFKMVQNGEGKCPRKTLSNIEEKTISVDENTTMKSDSFAKNKFDAENTKFIPMIDKTVNASTWPTNLHKSNYPEPEDLYSAVKPSQRRGGEGYLFGGVMSLVMGLMTVVRLTKNMPRKLTEAAIYGGEVDKAETTMVSNQEYMSMVKRMAELEEKCRSLDNQPAAFSPEKEQILTAALSRVDELELQLAQTKKTLEETMATQHVIMAYIDKKKKKKKFFGF</sequence>
<name>SFH3_ARATH</name>
<comment type="function">
    <text evidence="1 5">Required for transport of secretory proteins from the Golgi complex (By similarity). Catalyzes the transfer of phosphatidylinositol and phosphatidylcholine between membranes in vitro.</text>
</comment>
<comment type="subcellular location">
    <subcellularLocation>
        <location evidence="1">Golgi apparatus membrane</location>
        <topology evidence="1">Peripheral membrane protein</topology>
    </subcellularLocation>
    <subcellularLocation>
        <location evidence="1">Cell membrane</location>
        <topology evidence="1">Peripheral membrane protein</topology>
    </subcellularLocation>
</comment>
<comment type="alternative products">
    <event type="alternative splicing"/>
    <isoform>
        <id>Q93ZE9-1</id>
        <name>1</name>
        <sequence type="displayed"/>
    </isoform>
    <text>A number of isoforms are produced. According to EST sequences.</text>
</comment>
<comment type="tissue specificity">
    <text evidence="5">Predominantly expressed in flowers but also slightly detected in stems and immature siliques.</text>
</comment>
<comment type="developmental stage">
    <text evidence="5">First detected in the stigma papillae of the flowers at stage 11, and then in the pollen grains before and after fertilization.</text>
</comment>
<comment type="similarity">
    <text evidence="6">Belongs to the SFH family.</text>
</comment>
<comment type="sequence caution" evidence="6">
    <conflict type="erroneous gene model prediction">
        <sequence resource="EMBL-CDS" id="AAD23650"/>
    </conflict>
</comment>
<protein>
    <recommendedName>
        <fullName>Phosphatidylinositol/phosphatidylcholine transfer protein SFH3</fullName>
    </recommendedName>
    <alternativeName>
        <fullName>Protein SEC FOURTEEN HOMOLOGS 3</fullName>
        <shortName>AtSFH3</shortName>
    </alternativeName>
</protein>
<reference key="1">
    <citation type="journal article" date="1999" name="Nature">
        <title>Sequence and analysis of chromosome 2 of the plant Arabidopsis thaliana.</title>
        <authorList>
            <person name="Lin X."/>
            <person name="Kaul S."/>
            <person name="Rounsley S.D."/>
            <person name="Shea T.P."/>
            <person name="Benito M.-I."/>
            <person name="Town C.D."/>
            <person name="Fujii C.Y."/>
            <person name="Mason T.M."/>
            <person name="Bowman C.L."/>
            <person name="Barnstead M.E."/>
            <person name="Feldblyum T.V."/>
            <person name="Buell C.R."/>
            <person name="Ketchum K.A."/>
            <person name="Lee J.J."/>
            <person name="Ronning C.M."/>
            <person name="Koo H.L."/>
            <person name="Moffat K.S."/>
            <person name="Cronin L.A."/>
            <person name="Shen M."/>
            <person name="Pai G."/>
            <person name="Van Aken S."/>
            <person name="Umayam L."/>
            <person name="Tallon L.J."/>
            <person name="Gill J.E."/>
            <person name="Adams M.D."/>
            <person name="Carrera A.J."/>
            <person name="Creasy T.H."/>
            <person name="Goodman H.M."/>
            <person name="Somerville C.R."/>
            <person name="Copenhaver G.P."/>
            <person name="Preuss D."/>
            <person name="Nierman W.C."/>
            <person name="White O."/>
            <person name="Eisen J.A."/>
            <person name="Salzberg S.L."/>
            <person name="Fraser C.M."/>
            <person name="Venter J.C."/>
        </authorList>
    </citation>
    <scope>NUCLEOTIDE SEQUENCE [LARGE SCALE GENOMIC DNA]</scope>
    <source>
        <strain>cv. Columbia</strain>
    </source>
</reference>
<reference key="2">
    <citation type="journal article" date="2017" name="Plant J.">
        <title>Araport11: a complete reannotation of the Arabidopsis thaliana reference genome.</title>
        <authorList>
            <person name="Cheng C.Y."/>
            <person name="Krishnakumar V."/>
            <person name="Chan A.P."/>
            <person name="Thibaud-Nissen F."/>
            <person name="Schobel S."/>
            <person name="Town C.D."/>
        </authorList>
    </citation>
    <scope>GENOME REANNOTATION</scope>
    <source>
        <strain>cv. Columbia</strain>
    </source>
</reference>
<reference key="3">
    <citation type="journal article" date="2003" name="Science">
        <title>Empirical analysis of transcriptional activity in the Arabidopsis genome.</title>
        <authorList>
            <person name="Yamada K."/>
            <person name="Lim J."/>
            <person name="Dale J.M."/>
            <person name="Chen H."/>
            <person name="Shinn P."/>
            <person name="Palm C.J."/>
            <person name="Southwick A.M."/>
            <person name="Wu H.C."/>
            <person name="Kim C.J."/>
            <person name="Nguyen M."/>
            <person name="Pham P.K."/>
            <person name="Cheuk R.F."/>
            <person name="Karlin-Newmann G."/>
            <person name="Liu S.X."/>
            <person name="Lam B."/>
            <person name="Sakano H."/>
            <person name="Wu T."/>
            <person name="Yu G."/>
            <person name="Miranda M."/>
            <person name="Quach H.L."/>
            <person name="Tripp M."/>
            <person name="Chang C.H."/>
            <person name="Lee J.M."/>
            <person name="Toriumi M.J."/>
            <person name="Chan M.M."/>
            <person name="Tang C.C."/>
            <person name="Onodera C.S."/>
            <person name="Deng J.M."/>
            <person name="Akiyama K."/>
            <person name="Ansari Y."/>
            <person name="Arakawa T."/>
            <person name="Banh J."/>
            <person name="Banno F."/>
            <person name="Bowser L."/>
            <person name="Brooks S.Y."/>
            <person name="Carninci P."/>
            <person name="Chao Q."/>
            <person name="Choy N."/>
            <person name="Enju A."/>
            <person name="Goldsmith A.D."/>
            <person name="Gurjal M."/>
            <person name="Hansen N.F."/>
            <person name="Hayashizaki Y."/>
            <person name="Johnson-Hopson C."/>
            <person name="Hsuan V.W."/>
            <person name="Iida K."/>
            <person name="Karnes M."/>
            <person name="Khan S."/>
            <person name="Koesema E."/>
            <person name="Ishida J."/>
            <person name="Jiang P.X."/>
            <person name="Jones T."/>
            <person name="Kawai J."/>
            <person name="Kamiya A."/>
            <person name="Meyers C."/>
            <person name="Nakajima M."/>
            <person name="Narusaka M."/>
            <person name="Seki M."/>
            <person name="Sakurai T."/>
            <person name="Satou M."/>
            <person name="Tamse R."/>
            <person name="Vaysberg M."/>
            <person name="Wallender E.K."/>
            <person name="Wong C."/>
            <person name="Yamamura Y."/>
            <person name="Yuan S."/>
            <person name="Shinozaki K."/>
            <person name="Davis R.W."/>
            <person name="Theologis A."/>
            <person name="Ecker J.R."/>
        </authorList>
    </citation>
    <scope>NUCLEOTIDE SEQUENCE [LARGE SCALE MRNA]</scope>
    <source>
        <strain>cv. Columbia</strain>
    </source>
</reference>
<reference key="4">
    <citation type="submission" date="2004-09" db="EMBL/GenBank/DDBJ databases">
        <title>Large-scale analysis of RIKEN Arabidopsis full-length (RAFL) cDNAs.</title>
        <authorList>
            <person name="Totoki Y."/>
            <person name="Seki M."/>
            <person name="Ishida J."/>
            <person name="Nakajima M."/>
            <person name="Enju A."/>
            <person name="Kamiya A."/>
            <person name="Narusaka M."/>
            <person name="Shin-i T."/>
            <person name="Nakagawa M."/>
            <person name="Sakamoto N."/>
            <person name="Oishi K."/>
            <person name="Kohara Y."/>
            <person name="Kobayashi M."/>
            <person name="Toyoda A."/>
            <person name="Sakaki Y."/>
            <person name="Sakurai T."/>
            <person name="Iida K."/>
            <person name="Akiyama K."/>
            <person name="Satou M."/>
            <person name="Toyoda T."/>
            <person name="Konagaya A."/>
            <person name="Carninci P."/>
            <person name="Kawai J."/>
            <person name="Hayashizaki Y."/>
            <person name="Shinozaki K."/>
        </authorList>
    </citation>
    <scope>NUCLEOTIDE SEQUENCE [LARGE SCALE MRNA]</scope>
    <source>
        <strain>cv. Columbia</strain>
    </source>
</reference>
<reference key="5">
    <citation type="journal article" date="2005" name="J. Cell Biol.">
        <title>A Sec14p-nodulin domain phosphatidylinositol transfer protein polarizes membrane growth of Arabidopsis thaliana root hairs.</title>
        <authorList>
            <person name="Vincent P."/>
            <person name="Chua M."/>
            <person name="Nogue F."/>
            <person name="Fairbrother A."/>
            <person name="Mekeel H."/>
            <person name="Xu Y."/>
            <person name="Allen N."/>
            <person name="Bibikova T.N."/>
            <person name="Gilroy S."/>
            <person name="Bankaitis V.A."/>
        </authorList>
    </citation>
    <scope>GENE FAMILY</scope>
</reference>
<reference key="6">
    <citation type="journal article" date="2006" name="Nat. Chem. Biol.">
        <title>Phosphatidylinositol transfer proteins and cellular nanoreactors for lipid signaling.</title>
        <authorList>
            <person name="Ile K.E."/>
            <person name="Schaaf G."/>
            <person name="Bankaitis V.A."/>
        </authorList>
    </citation>
    <scope>REVIEW</scope>
</reference>
<reference key="7">
    <citation type="journal article" date="2007" name="J. Plant Physiol.">
        <title>Identification of two phosphatidylinositol/phosphatidylcholine transfer protein genes that are predominately transcribed in the flowers of Arabidopsis thaliana.</title>
        <authorList>
            <person name="Mo P."/>
            <person name="Zhu Y."/>
            <person name="Liu X."/>
            <person name="Zhang A."/>
            <person name="Yan C."/>
            <person name="Wang D."/>
        </authorList>
    </citation>
    <scope>TISSUE SPECIFICITY</scope>
    <scope>DEVELOPMENTAL STAGE</scope>
    <scope>FUNCTION</scope>
</reference>
<organism>
    <name type="scientific">Arabidopsis thaliana</name>
    <name type="common">Mouse-ear cress</name>
    <dbReference type="NCBI Taxonomy" id="3702"/>
    <lineage>
        <taxon>Eukaryota</taxon>
        <taxon>Viridiplantae</taxon>
        <taxon>Streptophyta</taxon>
        <taxon>Embryophyta</taxon>
        <taxon>Tracheophyta</taxon>
        <taxon>Spermatophyta</taxon>
        <taxon>Magnoliopsida</taxon>
        <taxon>eudicotyledons</taxon>
        <taxon>Gunneridae</taxon>
        <taxon>Pentapetalae</taxon>
        <taxon>rosids</taxon>
        <taxon>malvids</taxon>
        <taxon>Brassicales</taxon>
        <taxon>Brassicaceae</taxon>
        <taxon>Camelineae</taxon>
        <taxon>Arabidopsis</taxon>
    </lineage>
</organism>
<keyword id="KW-0025">Alternative splicing</keyword>
<keyword id="KW-1003">Cell membrane</keyword>
<keyword id="KW-0175">Coiled coil</keyword>
<keyword id="KW-0333">Golgi apparatus</keyword>
<keyword id="KW-0472">Membrane</keyword>
<keyword id="KW-0653">Protein transport</keyword>
<keyword id="KW-1185">Reference proteome</keyword>
<keyword id="KW-0813">Transport</keyword>
<dbReference type="EMBL" id="AC006841">
    <property type="protein sequence ID" value="AAM15309.1"/>
    <property type="molecule type" value="Genomic_DNA"/>
</dbReference>
<dbReference type="EMBL" id="AC007119">
    <property type="protein sequence ID" value="AAD23650.1"/>
    <property type="status" value="ALT_SEQ"/>
    <property type="molecule type" value="Genomic_DNA"/>
</dbReference>
<dbReference type="EMBL" id="CP002685">
    <property type="protein sequence ID" value="AEC07192.1"/>
    <property type="molecule type" value="Genomic_DNA"/>
</dbReference>
<dbReference type="EMBL" id="CP002685">
    <property type="protein sequence ID" value="AEC07193.1"/>
    <property type="molecule type" value="Genomic_DNA"/>
</dbReference>
<dbReference type="EMBL" id="CP002685">
    <property type="protein sequence ID" value="ANM61245.1"/>
    <property type="molecule type" value="Genomic_DNA"/>
</dbReference>
<dbReference type="EMBL" id="CP002685">
    <property type="protein sequence ID" value="ANM61247.1"/>
    <property type="molecule type" value="Genomic_DNA"/>
</dbReference>
<dbReference type="EMBL" id="AY057587">
    <property type="protein sequence ID" value="AAL14382.1"/>
    <property type="molecule type" value="mRNA"/>
</dbReference>
<dbReference type="EMBL" id="AK176420">
    <property type="protein sequence ID" value="BAD44183.1"/>
    <property type="molecule type" value="mRNA"/>
</dbReference>
<dbReference type="PIR" id="E84602">
    <property type="entry name" value="E84602"/>
</dbReference>
<dbReference type="RefSeq" id="NP_001031389.1">
    <molecule id="Q93ZE9-1"/>
    <property type="nucleotide sequence ID" value="NM_001036312.2"/>
</dbReference>
<dbReference type="RefSeq" id="NP_001318263.1">
    <molecule id="Q93ZE9-1"/>
    <property type="nucleotide sequence ID" value="NM_001335761.1"/>
</dbReference>
<dbReference type="RefSeq" id="NP_001323475.1">
    <molecule id="Q93ZE9-1"/>
    <property type="nucleotide sequence ID" value="NM_001335763.1"/>
</dbReference>
<dbReference type="RefSeq" id="NP_565514.1">
    <molecule id="Q93ZE9-1"/>
    <property type="nucleotide sequence ID" value="NM_127726.2"/>
</dbReference>
<dbReference type="SMR" id="Q93ZE9"/>
<dbReference type="FunCoup" id="Q93ZE9">
    <property type="interactions" value="52"/>
</dbReference>
<dbReference type="STRING" id="3702.Q93ZE9"/>
<dbReference type="PaxDb" id="3702-AT2G21540.1"/>
<dbReference type="ProteomicsDB" id="232650">
    <molecule id="Q93ZE9-1"/>
</dbReference>
<dbReference type="EnsemblPlants" id="AT2G21540.1">
    <molecule id="Q93ZE9-1"/>
    <property type="protein sequence ID" value="AT2G21540.1"/>
    <property type="gene ID" value="AT2G21540"/>
</dbReference>
<dbReference type="EnsemblPlants" id="AT2G21540.2">
    <molecule id="Q93ZE9-1"/>
    <property type="protein sequence ID" value="AT2G21540.2"/>
    <property type="gene ID" value="AT2G21540"/>
</dbReference>
<dbReference type="EnsemblPlants" id="AT2G21540.4">
    <molecule id="Q93ZE9-1"/>
    <property type="protein sequence ID" value="AT2G21540.4"/>
    <property type="gene ID" value="AT2G21540"/>
</dbReference>
<dbReference type="EnsemblPlants" id="AT2G21540.6">
    <molecule id="Q93ZE9-1"/>
    <property type="protein sequence ID" value="AT2G21540.6"/>
    <property type="gene ID" value="AT2G21540"/>
</dbReference>
<dbReference type="GeneID" id="816693"/>
<dbReference type="Gramene" id="AT2G21540.1">
    <molecule id="Q93ZE9-1"/>
    <property type="protein sequence ID" value="AT2G21540.1"/>
    <property type="gene ID" value="AT2G21540"/>
</dbReference>
<dbReference type="Gramene" id="AT2G21540.2">
    <molecule id="Q93ZE9-1"/>
    <property type="protein sequence ID" value="AT2G21540.2"/>
    <property type="gene ID" value="AT2G21540"/>
</dbReference>
<dbReference type="Gramene" id="AT2G21540.4">
    <molecule id="Q93ZE9-1"/>
    <property type="protein sequence ID" value="AT2G21540.4"/>
    <property type="gene ID" value="AT2G21540"/>
</dbReference>
<dbReference type="Gramene" id="AT2G21540.6">
    <molecule id="Q93ZE9-1"/>
    <property type="protein sequence ID" value="AT2G21540.6"/>
    <property type="gene ID" value="AT2G21540"/>
</dbReference>
<dbReference type="KEGG" id="ath:AT2G21540"/>
<dbReference type="Araport" id="AT2G21540"/>
<dbReference type="TAIR" id="AT2G21540">
    <property type="gene designation" value="SFH3"/>
</dbReference>
<dbReference type="eggNOG" id="KOG1471">
    <property type="taxonomic scope" value="Eukaryota"/>
</dbReference>
<dbReference type="InParanoid" id="Q93ZE9"/>
<dbReference type="OMA" id="WKDDEVM"/>
<dbReference type="PhylomeDB" id="Q93ZE9"/>
<dbReference type="PRO" id="PR:Q93ZE9"/>
<dbReference type="Proteomes" id="UP000006548">
    <property type="component" value="Chromosome 2"/>
</dbReference>
<dbReference type="ExpressionAtlas" id="Q93ZE9">
    <property type="expression patterns" value="baseline and differential"/>
</dbReference>
<dbReference type="GO" id="GO:0000139">
    <property type="term" value="C:Golgi membrane"/>
    <property type="evidence" value="ECO:0007669"/>
    <property type="project" value="UniProtKB-SubCell"/>
</dbReference>
<dbReference type="GO" id="GO:0005886">
    <property type="term" value="C:plasma membrane"/>
    <property type="evidence" value="ECO:0007669"/>
    <property type="project" value="UniProtKB-SubCell"/>
</dbReference>
<dbReference type="GO" id="GO:0009908">
    <property type="term" value="P:flower development"/>
    <property type="evidence" value="ECO:0000314"/>
    <property type="project" value="TAIR"/>
</dbReference>
<dbReference type="GO" id="GO:0015031">
    <property type="term" value="P:protein transport"/>
    <property type="evidence" value="ECO:0007669"/>
    <property type="project" value="UniProtKB-KW"/>
</dbReference>
<dbReference type="CDD" id="cd00170">
    <property type="entry name" value="SEC14"/>
    <property type="match status" value="1"/>
</dbReference>
<dbReference type="FunFam" id="1.10.8.20:FF:000006">
    <property type="entry name" value="Phosphatidylinositol/phosphatidylcholine transfer protein SFH3"/>
    <property type="match status" value="1"/>
</dbReference>
<dbReference type="FunFam" id="3.40.525.10:FF:000011">
    <property type="entry name" value="SEC14 cytosolic factor"/>
    <property type="match status" value="1"/>
</dbReference>
<dbReference type="Gene3D" id="3.40.525.10">
    <property type="entry name" value="CRAL-TRIO lipid binding domain"/>
    <property type="match status" value="1"/>
</dbReference>
<dbReference type="Gene3D" id="1.10.8.20">
    <property type="entry name" value="N-terminal domain of phosphatidylinositol transfer protein sec14p"/>
    <property type="match status" value="1"/>
</dbReference>
<dbReference type="InterPro" id="IPR001251">
    <property type="entry name" value="CRAL-TRIO_dom"/>
</dbReference>
<dbReference type="InterPro" id="IPR036865">
    <property type="entry name" value="CRAL-TRIO_dom_sf"/>
</dbReference>
<dbReference type="InterPro" id="IPR011074">
    <property type="entry name" value="CRAL/TRIO_N_dom"/>
</dbReference>
<dbReference type="InterPro" id="IPR036273">
    <property type="entry name" value="CRAL/TRIO_N_dom_sf"/>
</dbReference>
<dbReference type="InterPro" id="IPR051026">
    <property type="entry name" value="PI/PC_transfer"/>
</dbReference>
<dbReference type="PANTHER" id="PTHR45657">
    <property type="entry name" value="CRAL-TRIO DOMAIN-CONTAINING PROTEIN YKL091C-RELATED"/>
    <property type="match status" value="1"/>
</dbReference>
<dbReference type="PANTHER" id="PTHR45657:SF1">
    <property type="entry name" value="CRAL-TRIO DOMAIN-CONTAINING PROTEIN YKL091C-RELATED"/>
    <property type="match status" value="1"/>
</dbReference>
<dbReference type="Pfam" id="PF00650">
    <property type="entry name" value="CRAL_TRIO"/>
    <property type="match status" value="1"/>
</dbReference>
<dbReference type="Pfam" id="PF03765">
    <property type="entry name" value="CRAL_TRIO_N"/>
    <property type="match status" value="1"/>
</dbReference>
<dbReference type="PRINTS" id="PR00180">
    <property type="entry name" value="CRETINALDHBP"/>
</dbReference>
<dbReference type="SMART" id="SM01100">
    <property type="entry name" value="CRAL_TRIO_N"/>
    <property type="match status" value="1"/>
</dbReference>
<dbReference type="SMART" id="SM00516">
    <property type="entry name" value="SEC14"/>
    <property type="match status" value="1"/>
</dbReference>
<dbReference type="SUPFAM" id="SSF52087">
    <property type="entry name" value="CRAL/TRIO domain"/>
    <property type="match status" value="1"/>
</dbReference>
<dbReference type="SUPFAM" id="SSF46938">
    <property type="entry name" value="CRAL/TRIO N-terminal domain"/>
    <property type="match status" value="1"/>
</dbReference>
<dbReference type="PROSITE" id="PS50191">
    <property type="entry name" value="CRAL_TRIO"/>
    <property type="match status" value="1"/>
</dbReference>
<gene>
    <name type="primary">SFH3</name>
    <name type="ordered locus">At2g21540</name>
    <name type="ORF">F2G1.19</name>
    <name type="ORF">F3K23.30</name>
</gene>